<evidence type="ECO:0000250" key="1"/>
<evidence type="ECO:0000255" key="2">
    <source>
        <dbReference type="HAMAP-Rule" id="MF_00047"/>
    </source>
</evidence>
<comment type="function">
    <text evidence="2">Cell wall formation.</text>
</comment>
<comment type="catalytic activity">
    <reaction evidence="2">
        <text>2 D-alanine + ATP = D-alanyl-D-alanine + ADP + phosphate + H(+)</text>
        <dbReference type="Rhea" id="RHEA:11224"/>
        <dbReference type="ChEBI" id="CHEBI:15378"/>
        <dbReference type="ChEBI" id="CHEBI:30616"/>
        <dbReference type="ChEBI" id="CHEBI:43474"/>
        <dbReference type="ChEBI" id="CHEBI:57416"/>
        <dbReference type="ChEBI" id="CHEBI:57822"/>
        <dbReference type="ChEBI" id="CHEBI:456216"/>
        <dbReference type="EC" id="6.3.2.4"/>
    </reaction>
</comment>
<comment type="cofactor">
    <cofactor evidence="1">
        <name>Mg(2+)</name>
        <dbReference type="ChEBI" id="CHEBI:18420"/>
    </cofactor>
    <cofactor evidence="1">
        <name>Mn(2+)</name>
        <dbReference type="ChEBI" id="CHEBI:29035"/>
    </cofactor>
    <text evidence="1">Binds 2 magnesium or manganese ions per subunit.</text>
</comment>
<comment type="pathway">
    <text evidence="2">Cell wall biogenesis; peptidoglycan biosynthesis.</text>
</comment>
<comment type="subcellular location">
    <subcellularLocation>
        <location evidence="2">Cytoplasm</location>
    </subcellularLocation>
</comment>
<comment type="similarity">
    <text evidence="2">Belongs to the D-alanine--D-alanine ligase family.</text>
</comment>
<dbReference type="EC" id="6.3.2.4" evidence="2"/>
<dbReference type="EMBL" id="CP000725">
    <property type="protein sequence ID" value="ABV09351.1"/>
    <property type="molecule type" value="Genomic_DNA"/>
</dbReference>
<dbReference type="RefSeq" id="WP_012130527.1">
    <property type="nucleotide sequence ID" value="NC_009785.1"/>
</dbReference>
<dbReference type="SMR" id="A8AY66"/>
<dbReference type="STRING" id="467705.SGO_1447"/>
<dbReference type="KEGG" id="sgo:SGO_1447"/>
<dbReference type="eggNOG" id="COG1181">
    <property type="taxonomic scope" value="Bacteria"/>
</dbReference>
<dbReference type="HOGENOM" id="CLU_039268_0_0_9"/>
<dbReference type="UniPathway" id="UPA00219"/>
<dbReference type="Proteomes" id="UP000001131">
    <property type="component" value="Chromosome"/>
</dbReference>
<dbReference type="GO" id="GO:0005829">
    <property type="term" value="C:cytosol"/>
    <property type="evidence" value="ECO:0007669"/>
    <property type="project" value="TreeGrafter"/>
</dbReference>
<dbReference type="GO" id="GO:0005524">
    <property type="term" value="F:ATP binding"/>
    <property type="evidence" value="ECO:0007669"/>
    <property type="project" value="UniProtKB-KW"/>
</dbReference>
<dbReference type="GO" id="GO:0008716">
    <property type="term" value="F:D-alanine-D-alanine ligase activity"/>
    <property type="evidence" value="ECO:0007669"/>
    <property type="project" value="UniProtKB-UniRule"/>
</dbReference>
<dbReference type="GO" id="GO:0046872">
    <property type="term" value="F:metal ion binding"/>
    <property type="evidence" value="ECO:0007669"/>
    <property type="project" value="UniProtKB-KW"/>
</dbReference>
<dbReference type="GO" id="GO:0071555">
    <property type="term" value="P:cell wall organization"/>
    <property type="evidence" value="ECO:0007669"/>
    <property type="project" value="UniProtKB-KW"/>
</dbReference>
<dbReference type="GO" id="GO:0009252">
    <property type="term" value="P:peptidoglycan biosynthetic process"/>
    <property type="evidence" value="ECO:0007669"/>
    <property type="project" value="UniProtKB-UniRule"/>
</dbReference>
<dbReference type="GO" id="GO:0008360">
    <property type="term" value="P:regulation of cell shape"/>
    <property type="evidence" value="ECO:0007669"/>
    <property type="project" value="UniProtKB-KW"/>
</dbReference>
<dbReference type="FunFam" id="3.30.1490.20:FF:000007">
    <property type="entry name" value="D-alanine--D-alanine ligase"/>
    <property type="match status" value="1"/>
</dbReference>
<dbReference type="FunFam" id="3.30.470.20:FF:000008">
    <property type="entry name" value="D-alanine--D-alanine ligase"/>
    <property type="match status" value="1"/>
</dbReference>
<dbReference type="Gene3D" id="3.40.50.20">
    <property type="match status" value="1"/>
</dbReference>
<dbReference type="Gene3D" id="3.30.1490.20">
    <property type="entry name" value="ATP-grasp fold, A domain"/>
    <property type="match status" value="1"/>
</dbReference>
<dbReference type="Gene3D" id="3.30.470.20">
    <property type="entry name" value="ATP-grasp fold, B domain"/>
    <property type="match status" value="1"/>
</dbReference>
<dbReference type="HAMAP" id="MF_00047">
    <property type="entry name" value="Dala_Dala_lig"/>
    <property type="match status" value="1"/>
</dbReference>
<dbReference type="InterPro" id="IPR011761">
    <property type="entry name" value="ATP-grasp"/>
</dbReference>
<dbReference type="InterPro" id="IPR013815">
    <property type="entry name" value="ATP_grasp_subdomain_1"/>
</dbReference>
<dbReference type="InterPro" id="IPR000291">
    <property type="entry name" value="D-Ala_lig_Van_CS"/>
</dbReference>
<dbReference type="InterPro" id="IPR005905">
    <property type="entry name" value="D_ala_D_ala"/>
</dbReference>
<dbReference type="InterPro" id="IPR011095">
    <property type="entry name" value="Dala_Dala_lig_C"/>
</dbReference>
<dbReference type="InterPro" id="IPR011127">
    <property type="entry name" value="Dala_Dala_lig_N"/>
</dbReference>
<dbReference type="InterPro" id="IPR016185">
    <property type="entry name" value="PreATP-grasp_dom_sf"/>
</dbReference>
<dbReference type="NCBIfam" id="TIGR01205">
    <property type="entry name" value="D_ala_D_alaTIGR"/>
    <property type="match status" value="1"/>
</dbReference>
<dbReference type="NCBIfam" id="NF002528">
    <property type="entry name" value="PRK01966.1-4"/>
    <property type="match status" value="1"/>
</dbReference>
<dbReference type="NCBIfam" id="NF002529">
    <property type="entry name" value="PRK01966.1-5"/>
    <property type="match status" value="1"/>
</dbReference>
<dbReference type="PANTHER" id="PTHR23132">
    <property type="entry name" value="D-ALANINE--D-ALANINE LIGASE"/>
    <property type="match status" value="1"/>
</dbReference>
<dbReference type="PANTHER" id="PTHR23132:SF25">
    <property type="entry name" value="D-ALANINE--D-ALANINE LIGASE A"/>
    <property type="match status" value="1"/>
</dbReference>
<dbReference type="Pfam" id="PF07478">
    <property type="entry name" value="Dala_Dala_lig_C"/>
    <property type="match status" value="1"/>
</dbReference>
<dbReference type="Pfam" id="PF01820">
    <property type="entry name" value="Dala_Dala_lig_N"/>
    <property type="match status" value="1"/>
</dbReference>
<dbReference type="PIRSF" id="PIRSF039102">
    <property type="entry name" value="Ddl/VanB"/>
    <property type="match status" value="1"/>
</dbReference>
<dbReference type="SUPFAM" id="SSF56059">
    <property type="entry name" value="Glutathione synthetase ATP-binding domain-like"/>
    <property type="match status" value="1"/>
</dbReference>
<dbReference type="SUPFAM" id="SSF52440">
    <property type="entry name" value="PreATP-grasp domain"/>
    <property type="match status" value="1"/>
</dbReference>
<dbReference type="PROSITE" id="PS50975">
    <property type="entry name" value="ATP_GRASP"/>
    <property type="match status" value="1"/>
</dbReference>
<dbReference type="PROSITE" id="PS00843">
    <property type="entry name" value="DALA_DALA_LIGASE_1"/>
    <property type="match status" value="1"/>
</dbReference>
<dbReference type="PROSITE" id="PS00844">
    <property type="entry name" value="DALA_DALA_LIGASE_2"/>
    <property type="match status" value="1"/>
</dbReference>
<protein>
    <recommendedName>
        <fullName evidence="2">D-alanine--D-alanine ligase</fullName>
        <ecNumber evidence="2">6.3.2.4</ecNumber>
    </recommendedName>
    <alternativeName>
        <fullName evidence="2">D-Ala-D-Ala ligase</fullName>
    </alternativeName>
    <alternativeName>
        <fullName evidence="2">D-alanylalanine synthetase</fullName>
    </alternativeName>
</protein>
<accession>A8AY66</accession>
<reference key="1">
    <citation type="journal article" date="2007" name="J. Bacteriol.">
        <title>Genome-wide transcriptional changes in Streptococcus gordonii in response to competence signaling peptide.</title>
        <authorList>
            <person name="Vickerman M.M."/>
            <person name="Iobst S."/>
            <person name="Jesionowski A.M."/>
            <person name="Gill S.R."/>
        </authorList>
    </citation>
    <scope>NUCLEOTIDE SEQUENCE [LARGE SCALE GENOMIC DNA]</scope>
    <source>
        <strain>Challis / ATCC 35105 / BCRC 15272 / CH1 / DL1 / V288</strain>
    </source>
</reference>
<feature type="chain" id="PRO_1000074800" description="D-alanine--D-alanine ligase">
    <location>
        <begin position="1"/>
        <end position="348"/>
    </location>
</feature>
<feature type="domain" description="ATP-grasp" evidence="2">
    <location>
        <begin position="132"/>
        <end position="334"/>
    </location>
</feature>
<feature type="binding site" evidence="2">
    <location>
        <begin position="162"/>
        <end position="217"/>
    </location>
    <ligand>
        <name>ATP</name>
        <dbReference type="ChEBI" id="CHEBI:30616"/>
    </ligand>
</feature>
<feature type="binding site" evidence="2">
    <location>
        <position position="288"/>
    </location>
    <ligand>
        <name>Mg(2+)</name>
        <dbReference type="ChEBI" id="CHEBI:18420"/>
        <label>1</label>
    </ligand>
</feature>
<feature type="binding site" evidence="2">
    <location>
        <position position="301"/>
    </location>
    <ligand>
        <name>Mg(2+)</name>
        <dbReference type="ChEBI" id="CHEBI:18420"/>
        <label>1</label>
    </ligand>
</feature>
<feature type="binding site" evidence="2">
    <location>
        <position position="301"/>
    </location>
    <ligand>
        <name>Mg(2+)</name>
        <dbReference type="ChEBI" id="CHEBI:18420"/>
        <label>2</label>
    </ligand>
</feature>
<feature type="binding site" evidence="2">
    <location>
        <position position="303"/>
    </location>
    <ligand>
        <name>Mg(2+)</name>
        <dbReference type="ChEBI" id="CHEBI:18420"/>
        <label>2</label>
    </ligand>
</feature>
<sequence length="348" mass="38643">MAKKSLILLYGGRSAEREVSVLSAESVMRAINYDLFSVKTYFITKEGDFIKTQEFSSKPAEDVRLMTNDTVDMSRKIKPSDIYEEGAVVFPVLHGPMGEDGSIQGFLEVLKMPYVGCNILSSSLAMDKITTKRVLESAGIAQVPYVALVDGEDLEQKIQEIEEKLSYPVFTKPSNMGSSVGISKSDNQEELRASLDLAFKYDSRVLVEQGVTAREIEVGLLGNADVKSSLPGEVVKDVAFYDYQAKYIDNKITMAIPAQLPEGVVNTMRQNAEIAFRAIGGLGLSRCDFFYTEDGQVFLNELNTMPGFTQWSMYPLLWENMGLAYPDLIEKLVALAEEAFAKREAHLL</sequence>
<name>DDL_STRGC</name>
<organism>
    <name type="scientific">Streptococcus gordonii (strain Challis / ATCC 35105 / BCRC 15272 / CH1 / DL1 / V288)</name>
    <dbReference type="NCBI Taxonomy" id="467705"/>
    <lineage>
        <taxon>Bacteria</taxon>
        <taxon>Bacillati</taxon>
        <taxon>Bacillota</taxon>
        <taxon>Bacilli</taxon>
        <taxon>Lactobacillales</taxon>
        <taxon>Streptococcaceae</taxon>
        <taxon>Streptococcus</taxon>
    </lineage>
</organism>
<gene>
    <name evidence="2" type="primary">ddl</name>
    <name type="ordered locus">SGO_1447</name>
</gene>
<proteinExistence type="inferred from homology"/>
<keyword id="KW-0067">ATP-binding</keyword>
<keyword id="KW-0133">Cell shape</keyword>
<keyword id="KW-0961">Cell wall biogenesis/degradation</keyword>
<keyword id="KW-0963">Cytoplasm</keyword>
<keyword id="KW-0436">Ligase</keyword>
<keyword id="KW-0460">Magnesium</keyword>
<keyword id="KW-0464">Manganese</keyword>
<keyword id="KW-0479">Metal-binding</keyword>
<keyword id="KW-0547">Nucleotide-binding</keyword>
<keyword id="KW-0573">Peptidoglycan synthesis</keyword>
<keyword id="KW-1185">Reference proteome</keyword>